<gene>
    <name evidence="1" type="primary">hmp</name>
    <name type="synonym">fhp</name>
    <name type="ordered locus">BP2212</name>
</gene>
<reference key="1">
    <citation type="journal article" date="2003" name="Nat. Genet.">
        <title>Comparative analysis of the genome sequences of Bordetella pertussis, Bordetella parapertussis and Bordetella bronchiseptica.</title>
        <authorList>
            <person name="Parkhill J."/>
            <person name="Sebaihia M."/>
            <person name="Preston A."/>
            <person name="Murphy L.D."/>
            <person name="Thomson N.R."/>
            <person name="Harris D.E."/>
            <person name="Holden M.T.G."/>
            <person name="Churcher C.M."/>
            <person name="Bentley S.D."/>
            <person name="Mungall K.L."/>
            <person name="Cerdeno-Tarraga A.-M."/>
            <person name="Temple L."/>
            <person name="James K.D."/>
            <person name="Harris B."/>
            <person name="Quail M.A."/>
            <person name="Achtman M."/>
            <person name="Atkin R."/>
            <person name="Baker S."/>
            <person name="Basham D."/>
            <person name="Bason N."/>
            <person name="Cherevach I."/>
            <person name="Chillingworth T."/>
            <person name="Collins M."/>
            <person name="Cronin A."/>
            <person name="Davis P."/>
            <person name="Doggett J."/>
            <person name="Feltwell T."/>
            <person name="Goble A."/>
            <person name="Hamlin N."/>
            <person name="Hauser H."/>
            <person name="Holroyd S."/>
            <person name="Jagels K."/>
            <person name="Leather S."/>
            <person name="Moule S."/>
            <person name="Norberczak H."/>
            <person name="O'Neil S."/>
            <person name="Ormond D."/>
            <person name="Price C."/>
            <person name="Rabbinowitsch E."/>
            <person name="Rutter S."/>
            <person name="Sanders M."/>
            <person name="Saunders D."/>
            <person name="Seeger K."/>
            <person name="Sharp S."/>
            <person name="Simmonds M."/>
            <person name="Skelton J."/>
            <person name="Squares R."/>
            <person name="Squares S."/>
            <person name="Stevens K."/>
            <person name="Unwin L."/>
            <person name="Whitehead S."/>
            <person name="Barrell B.G."/>
            <person name="Maskell D.J."/>
        </authorList>
    </citation>
    <scope>NUCLEOTIDE SEQUENCE [LARGE SCALE GENOMIC DNA]</scope>
    <source>
        <strain>Tohama I / ATCC BAA-589 / NCTC 13251</strain>
    </source>
</reference>
<evidence type="ECO:0000255" key="1">
    <source>
        <dbReference type="HAMAP-Rule" id="MF_01252"/>
    </source>
</evidence>
<evidence type="ECO:0000255" key="2">
    <source>
        <dbReference type="PROSITE-ProRule" id="PRU00238"/>
    </source>
</evidence>
<comment type="function">
    <text evidence="1">Is involved in NO detoxification in an aerobic process, termed nitric oxide dioxygenase (NOD) reaction that utilizes O(2) and NAD(P)H to convert NO to nitrate, which protects the bacterium from various noxious nitrogen compounds. Therefore, plays a central role in the inducible response to nitrosative stress.</text>
</comment>
<comment type="catalytic activity">
    <reaction evidence="1">
        <text>2 nitric oxide + NADPH + 2 O2 = 2 nitrate + NADP(+) + H(+)</text>
        <dbReference type="Rhea" id="RHEA:19465"/>
        <dbReference type="ChEBI" id="CHEBI:15378"/>
        <dbReference type="ChEBI" id="CHEBI:15379"/>
        <dbReference type="ChEBI" id="CHEBI:16480"/>
        <dbReference type="ChEBI" id="CHEBI:17632"/>
        <dbReference type="ChEBI" id="CHEBI:57783"/>
        <dbReference type="ChEBI" id="CHEBI:58349"/>
        <dbReference type="EC" id="1.14.12.17"/>
    </reaction>
</comment>
<comment type="catalytic activity">
    <reaction evidence="1">
        <text>2 nitric oxide + NADH + 2 O2 = 2 nitrate + NAD(+) + H(+)</text>
        <dbReference type="Rhea" id="RHEA:19469"/>
        <dbReference type="ChEBI" id="CHEBI:15378"/>
        <dbReference type="ChEBI" id="CHEBI:15379"/>
        <dbReference type="ChEBI" id="CHEBI:16480"/>
        <dbReference type="ChEBI" id="CHEBI:17632"/>
        <dbReference type="ChEBI" id="CHEBI:57540"/>
        <dbReference type="ChEBI" id="CHEBI:57945"/>
        <dbReference type="EC" id="1.14.12.17"/>
    </reaction>
</comment>
<comment type="cofactor">
    <cofactor evidence="1">
        <name>heme b</name>
        <dbReference type="ChEBI" id="CHEBI:60344"/>
    </cofactor>
    <text evidence="1">Binds 1 heme b (iron(II)-protoporphyrin IX) group per subunit.</text>
</comment>
<comment type="cofactor">
    <cofactor evidence="1">
        <name>FAD</name>
        <dbReference type="ChEBI" id="CHEBI:57692"/>
    </cofactor>
    <text evidence="1">Binds 1 FAD per subunit.</text>
</comment>
<comment type="domain">
    <text>Consists of two distinct domains; an N-terminal heme-containing oxygen-binding domain and a C-terminal reductase domain with binding sites for FAD and NAD(P)H.</text>
</comment>
<comment type="similarity">
    <text evidence="1">Belongs to the globin family. Two-domain flavohemoproteins subfamily.</text>
</comment>
<comment type="similarity">
    <text evidence="1">In the C-terminal section; belongs to the flavoprotein pyridine nucleotide cytochrome reductase family.</text>
</comment>
<dbReference type="EC" id="1.14.12.17" evidence="1"/>
<dbReference type="EMBL" id="BX640417">
    <property type="protein sequence ID" value="CAE42489.1"/>
    <property type="molecule type" value="Genomic_DNA"/>
</dbReference>
<dbReference type="RefSeq" id="NP_880857.1">
    <property type="nucleotide sequence ID" value="NC_002929.2"/>
</dbReference>
<dbReference type="SMR" id="Q7TTP0"/>
<dbReference type="STRING" id="257313.BP2212"/>
<dbReference type="PaxDb" id="257313-BP2212"/>
<dbReference type="KEGG" id="bpe:BP2212"/>
<dbReference type="PATRIC" id="fig|257313.5.peg.2387"/>
<dbReference type="eggNOG" id="COG1017">
    <property type="taxonomic scope" value="Bacteria"/>
</dbReference>
<dbReference type="eggNOG" id="COG1018">
    <property type="taxonomic scope" value="Bacteria"/>
</dbReference>
<dbReference type="HOGENOM" id="CLU_003827_12_0_4"/>
<dbReference type="Proteomes" id="UP000002676">
    <property type="component" value="Chromosome"/>
</dbReference>
<dbReference type="GO" id="GO:0071949">
    <property type="term" value="F:FAD binding"/>
    <property type="evidence" value="ECO:0007669"/>
    <property type="project" value="InterPro"/>
</dbReference>
<dbReference type="GO" id="GO:0020037">
    <property type="term" value="F:heme binding"/>
    <property type="evidence" value="ECO:0007669"/>
    <property type="project" value="InterPro"/>
</dbReference>
<dbReference type="GO" id="GO:0046872">
    <property type="term" value="F:metal ion binding"/>
    <property type="evidence" value="ECO:0007669"/>
    <property type="project" value="UniProtKB-KW"/>
</dbReference>
<dbReference type="GO" id="GO:0008941">
    <property type="term" value="F:nitric oxide dioxygenase NAD(P)H activity"/>
    <property type="evidence" value="ECO:0007669"/>
    <property type="project" value="UniProtKB-UniRule"/>
</dbReference>
<dbReference type="GO" id="GO:0019825">
    <property type="term" value="F:oxygen binding"/>
    <property type="evidence" value="ECO:0007669"/>
    <property type="project" value="InterPro"/>
</dbReference>
<dbReference type="GO" id="GO:0005344">
    <property type="term" value="F:oxygen carrier activity"/>
    <property type="evidence" value="ECO:0007669"/>
    <property type="project" value="UniProtKB-UniRule"/>
</dbReference>
<dbReference type="GO" id="GO:0071500">
    <property type="term" value="P:cellular response to nitrosative stress"/>
    <property type="evidence" value="ECO:0007669"/>
    <property type="project" value="TreeGrafter"/>
</dbReference>
<dbReference type="GO" id="GO:0046210">
    <property type="term" value="P:nitric oxide catabolic process"/>
    <property type="evidence" value="ECO:0007669"/>
    <property type="project" value="TreeGrafter"/>
</dbReference>
<dbReference type="GO" id="GO:0009636">
    <property type="term" value="P:response to toxic substance"/>
    <property type="evidence" value="ECO:0007669"/>
    <property type="project" value="UniProtKB-KW"/>
</dbReference>
<dbReference type="CDD" id="cd06184">
    <property type="entry name" value="flavohem_like_fad_nad_binding"/>
    <property type="match status" value="1"/>
</dbReference>
<dbReference type="FunFam" id="1.10.490.10:FF:000003">
    <property type="entry name" value="Flavohemoprotein"/>
    <property type="match status" value="1"/>
</dbReference>
<dbReference type="FunFam" id="2.40.30.10:FF:000034">
    <property type="entry name" value="Flavohemoprotein"/>
    <property type="match status" value="1"/>
</dbReference>
<dbReference type="FunFam" id="3.40.50.80:FF:000010">
    <property type="entry name" value="Flavohemoprotein"/>
    <property type="match status" value="1"/>
</dbReference>
<dbReference type="Gene3D" id="1.10.490.10">
    <property type="entry name" value="Globins"/>
    <property type="match status" value="1"/>
</dbReference>
<dbReference type="Gene3D" id="3.40.50.80">
    <property type="entry name" value="Nucleotide-binding domain of ferredoxin-NADP reductase (FNR) module"/>
    <property type="match status" value="1"/>
</dbReference>
<dbReference type="Gene3D" id="2.40.30.10">
    <property type="entry name" value="Translation factors"/>
    <property type="match status" value="1"/>
</dbReference>
<dbReference type="HAMAP" id="MF_01252">
    <property type="entry name" value="Hmp"/>
    <property type="match status" value="1"/>
</dbReference>
<dbReference type="InterPro" id="IPR008333">
    <property type="entry name" value="Cbr1-like_FAD-bd_dom"/>
</dbReference>
<dbReference type="InterPro" id="IPR017927">
    <property type="entry name" value="FAD-bd_FR_type"/>
</dbReference>
<dbReference type="InterPro" id="IPR039261">
    <property type="entry name" value="FNR_nucleotide-bd"/>
</dbReference>
<dbReference type="InterPro" id="IPR000971">
    <property type="entry name" value="Globin"/>
</dbReference>
<dbReference type="InterPro" id="IPR009050">
    <property type="entry name" value="Globin-like_sf"/>
</dbReference>
<dbReference type="InterPro" id="IPR012292">
    <property type="entry name" value="Globin/Proto"/>
</dbReference>
<dbReference type="InterPro" id="IPR023950">
    <property type="entry name" value="Hmp"/>
</dbReference>
<dbReference type="InterPro" id="IPR001433">
    <property type="entry name" value="OxRdtase_FAD/NAD-bd"/>
</dbReference>
<dbReference type="InterPro" id="IPR017938">
    <property type="entry name" value="Riboflavin_synthase-like_b-brl"/>
</dbReference>
<dbReference type="NCBIfam" id="NF009805">
    <property type="entry name" value="PRK13289.1"/>
    <property type="match status" value="1"/>
</dbReference>
<dbReference type="PANTHER" id="PTHR43396">
    <property type="entry name" value="FLAVOHEMOPROTEIN"/>
    <property type="match status" value="1"/>
</dbReference>
<dbReference type="PANTHER" id="PTHR43396:SF3">
    <property type="entry name" value="FLAVOHEMOPROTEIN"/>
    <property type="match status" value="1"/>
</dbReference>
<dbReference type="Pfam" id="PF00970">
    <property type="entry name" value="FAD_binding_6"/>
    <property type="match status" value="1"/>
</dbReference>
<dbReference type="Pfam" id="PF00042">
    <property type="entry name" value="Globin"/>
    <property type="match status" value="1"/>
</dbReference>
<dbReference type="Pfam" id="PF00175">
    <property type="entry name" value="NAD_binding_1"/>
    <property type="match status" value="1"/>
</dbReference>
<dbReference type="PRINTS" id="PR00410">
    <property type="entry name" value="PHEHYDRXLASE"/>
</dbReference>
<dbReference type="SUPFAM" id="SSF52343">
    <property type="entry name" value="Ferredoxin reductase-like, C-terminal NADP-linked domain"/>
    <property type="match status" value="1"/>
</dbReference>
<dbReference type="SUPFAM" id="SSF46458">
    <property type="entry name" value="Globin-like"/>
    <property type="match status" value="1"/>
</dbReference>
<dbReference type="SUPFAM" id="SSF63380">
    <property type="entry name" value="Riboflavin synthase domain-like"/>
    <property type="match status" value="1"/>
</dbReference>
<dbReference type="PROSITE" id="PS51384">
    <property type="entry name" value="FAD_FR"/>
    <property type="match status" value="1"/>
</dbReference>
<dbReference type="PROSITE" id="PS01033">
    <property type="entry name" value="GLOBIN"/>
    <property type="match status" value="1"/>
</dbReference>
<organism>
    <name type="scientific">Bordetella pertussis (strain Tohama I / ATCC BAA-589 / NCTC 13251)</name>
    <dbReference type="NCBI Taxonomy" id="257313"/>
    <lineage>
        <taxon>Bacteria</taxon>
        <taxon>Pseudomonadati</taxon>
        <taxon>Pseudomonadota</taxon>
        <taxon>Betaproteobacteria</taxon>
        <taxon>Burkholderiales</taxon>
        <taxon>Alcaligenaceae</taxon>
        <taxon>Bordetella</taxon>
    </lineage>
</organism>
<protein>
    <recommendedName>
        <fullName evidence="1">Flavohemoprotein</fullName>
    </recommendedName>
    <alternativeName>
        <fullName evidence="1">Flavohemoglobin</fullName>
    </alternativeName>
    <alternativeName>
        <fullName evidence="1">Hemoglobin-like protein</fullName>
    </alternativeName>
    <alternativeName>
        <fullName evidence="1">Nitric oxide dioxygenase</fullName>
        <shortName evidence="1">NO oxygenase</shortName>
        <shortName evidence="1">NOD</shortName>
        <ecNumber evidence="1">1.14.12.17</ecNumber>
    </alternativeName>
</protein>
<proteinExistence type="inferred from homology"/>
<feature type="chain" id="PRO_0000052427" description="Flavohemoprotein">
    <location>
        <begin position="1"/>
        <end position="402"/>
    </location>
</feature>
<feature type="domain" description="Globin" evidence="2">
    <location>
        <begin position="1"/>
        <end position="138"/>
    </location>
</feature>
<feature type="domain" description="FAD-binding FR-type" evidence="1">
    <location>
        <begin position="152"/>
        <end position="261"/>
    </location>
</feature>
<feature type="region of interest" description="Reductase">
    <location>
        <begin position="149"/>
        <end position="402"/>
    </location>
</feature>
<feature type="active site" description="Charge relay system" evidence="1">
    <location>
        <position position="95"/>
    </location>
</feature>
<feature type="active site" description="Charge relay system" evidence="1">
    <location>
        <position position="137"/>
    </location>
</feature>
<feature type="binding site" description="proximal binding residue" evidence="1">
    <location>
        <position position="85"/>
    </location>
    <ligand>
        <name>heme b</name>
        <dbReference type="ChEBI" id="CHEBI:60344"/>
    </ligand>
    <ligandPart>
        <name>Fe</name>
        <dbReference type="ChEBI" id="CHEBI:18248"/>
    </ligandPart>
</feature>
<feature type="binding site" evidence="1">
    <location>
        <position position="190"/>
    </location>
    <ligand>
        <name>FAD</name>
        <dbReference type="ChEBI" id="CHEBI:57692"/>
    </ligand>
</feature>
<feature type="binding site" evidence="1">
    <location>
        <begin position="206"/>
        <end position="209"/>
    </location>
    <ligand>
        <name>FAD</name>
        <dbReference type="ChEBI" id="CHEBI:57692"/>
    </ligand>
</feature>
<feature type="binding site" evidence="1">
    <location>
        <begin position="274"/>
        <end position="279"/>
    </location>
    <ligand>
        <name>NADP(+)</name>
        <dbReference type="ChEBI" id="CHEBI:58349"/>
    </ligand>
</feature>
<feature type="binding site" evidence="1">
    <location>
        <begin position="395"/>
        <end position="398"/>
    </location>
    <ligand>
        <name>FAD</name>
        <dbReference type="ChEBI" id="CHEBI:57692"/>
    </ligand>
</feature>
<feature type="site" description="Involved in heme-bound ligand stabilization and O-O bond activation" evidence="1">
    <location>
        <position position="29"/>
    </location>
</feature>
<feature type="site" description="Influences the redox potential of the prosthetic heme and FAD groups" evidence="1">
    <location>
        <position position="84"/>
    </location>
</feature>
<feature type="site" description="Influences the redox potential of the prosthetic heme and FAD groups" evidence="1">
    <location>
        <position position="394"/>
    </location>
</feature>
<keyword id="KW-0216">Detoxification</keyword>
<keyword id="KW-0274">FAD</keyword>
<keyword id="KW-0285">Flavoprotein</keyword>
<keyword id="KW-0349">Heme</keyword>
<keyword id="KW-0408">Iron</keyword>
<keyword id="KW-0479">Metal-binding</keyword>
<keyword id="KW-0520">NAD</keyword>
<keyword id="KW-0521">NADP</keyword>
<keyword id="KW-0560">Oxidoreductase</keyword>
<keyword id="KW-0561">Oxygen transport</keyword>
<keyword id="KW-1185">Reference proteome</keyword>
<keyword id="KW-0813">Transport</keyword>
<name>HMP_BORPE</name>
<accession>Q7TTP0</accession>
<sequence>MLSPEVRALVKATAPVLKEHGEALTRHFYTRMLGGNPELRQLFNQGHQQSGQQQQALAAAVAAYAEHIDDPSVLLQVVERIAHKHVSLGVRAEHYAIVGKHLLASIREVLGEAATDELIDAWAAAYGQLADLLIGRERALYAAAASRDGGWTGWRAFKVVRKTPESAEITSFYLAPADGGATPDYLPGQYVSVRVYVPELGLMQPRQYSLSEAPGMPGQLRISVKREAGSPAGMVSGTLHNRINEGDVLDVSPPQGDFTLDAEDGRPVVLLSGGVGLTPMVSMLNHLTARDDGRQIRFVHACREAGVHAMKEHINALAAKRPNVRKAVFYERVGADDRRGVDYDYEGRVDLHAIRDEVILPDADYYLCGPLPFMQAQRRALADLGVAEHRIHAEVFGTGGVA</sequence>